<organism>
    <name type="scientific">Prochlorococcus marinus (strain AS9601)</name>
    <dbReference type="NCBI Taxonomy" id="146891"/>
    <lineage>
        <taxon>Bacteria</taxon>
        <taxon>Bacillati</taxon>
        <taxon>Cyanobacteriota</taxon>
        <taxon>Cyanophyceae</taxon>
        <taxon>Synechococcales</taxon>
        <taxon>Prochlorococcaceae</taxon>
        <taxon>Prochlorococcus</taxon>
    </lineage>
</organism>
<feature type="chain" id="PRO_1000070319" description="Ribonuclease Z">
    <location>
        <begin position="1"/>
        <end position="312"/>
    </location>
</feature>
<feature type="active site" description="Proton acceptor" evidence="1">
    <location>
        <position position="66"/>
    </location>
</feature>
<feature type="binding site" evidence="1">
    <location>
        <position position="62"/>
    </location>
    <ligand>
        <name>Zn(2+)</name>
        <dbReference type="ChEBI" id="CHEBI:29105"/>
        <label>1</label>
        <note>catalytic</note>
    </ligand>
</feature>
<feature type="binding site" evidence="1">
    <location>
        <position position="64"/>
    </location>
    <ligand>
        <name>Zn(2+)</name>
        <dbReference type="ChEBI" id="CHEBI:29105"/>
        <label>1</label>
        <note>catalytic</note>
    </ligand>
</feature>
<feature type="binding site" evidence="1">
    <location>
        <position position="66"/>
    </location>
    <ligand>
        <name>Zn(2+)</name>
        <dbReference type="ChEBI" id="CHEBI:29105"/>
        <label>2</label>
        <note>catalytic</note>
    </ligand>
</feature>
<feature type="binding site" evidence="1">
    <location>
        <position position="67"/>
    </location>
    <ligand>
        <name>Zn(2+)</name>
        <dbReference type="ChEBI" id="CHEBI:29105"/>
        <label>2</label>
        <note>catalytic</note>
    </ligand>
</feature>
<feature type="binding site" evidence="1">
    <location>
        <position position="144"/>
    </location>
    <ligand>
        <name>Zn(2+)</name>
        <dbReference type="ChEBI" id="CHEBI:29105"/>
        <label>1</label>
        <note>catalytic</note>
    </ligand>
</feature>
<feature type="binding site" evidence="1">
    <location>
        <position position="215"/>
    </location>
    <ligand>
        <name>Zn(2+)</name>
        <dbReference type="ChEBI" id="CHEBI:29105"/>
        <label>1</label>
        <note>catalytic</note>
    </ligand>
</feature>
<feature type="binding site" evidence="1">
    <location>
        <position position="215"/>
    </location>
    <ligand>
        <name>Zn(2+)</name>
        <dbReference type="ChEBI" id="CHEBI:29105"/>
        <label>2</label>
        <note>catalytic</note>
    </ligand>
</feature>
<feature type="binding site" evidence="1">
    <location>
        <position position="273"/>
    </location>
    <ligand>
        <name>Zn(2+)</name>
        <dbReference type="ChEBI" id="CHEBI:29105"/>
        <label>2</label>
        <note>catalytic</note>
    </ligand>
</feature>
<evidence type="ECO:0000255" key="1">
    <source>
        <dbReference type="HAMAP-Rule" id="MF_01818"/>
    </source>
</evidence>
<gene>
    <name evidence="1" type="primary">rnz</name>
    <name type="ordered locus">A9601_15501</name>
</gene>
<name>RNZ_PROMS</name>
<keyword id="KW-0255">Endonuclease</keyword>
<keyword id="KW-0378">Hydrolase</keyword>
<keyword id="KW-0479">Metal-binding</keyword>
<keyword id="KW-0540">Nuclease</keyword>
<keyword id="KW-0819">tRNA processing</keyword>
<keyword id="KW-0862">Zinc</keyword>
<reference key="1">
    <citation type="journal article" date="2007" name="PLoS Genet.">
        <title>Patterns and implications of gene gain and loss in the evolution of Prochlorococcus.</title>
        <authorList>
            <person name="Kettler G.C."/>
            <person name="Martiny A.C."/>
            <person name="Huang K."/>
            <person name="Zucker J."/>
            <person name="Coleman M.L."/>
            <person name="Rodrigue S."/>
            <person name="Chen F."/>
            <person name="Lapidus A."/>
            <person name="Ferriera S."/>
            <person name="Johnson J."/>
            <person name="Steglich C."/>
            <person name="Church G.M."/>
            <person name="Richardson P."/>
            <person name="Chisholm S.W."/>
        </authorList>
    </citation>
    <scope>NUCLEOTIDE SEQUENCE [LARGE SCALE GENOMIC DNA]</scope>
    <source>
        <strain>AS9601</strain>
    </source>
</reference>
<dbReference type="EC" id="3.1.26.11" evidence="1"/>
<dbReference type="EMBL" id="CP000551">
    <property type="protein sequence ID" value="ABM70833.1"/>
    <property type="molecule type" value="Genomic_DNA"/>
</dbReference>
<dbReference type="RefSeq" id="WP_011818965.1">
    <property type="nucleotide sequence ID" value="NC_008816.1"/>
</dbReference>
<dbReference type="SMR" id="A2BSS2"/>
<dbReference type="STRING" id="146891.A9601_15501"/>
<dbReference type="KEGG" id="pmb:A9601_15501"/>
<dbReference type="eggNOG" id="COG1234">
    <property type="taxonomic scope" value="Bacteria"/>
</dbReference>
<dbReference type="HOGENOM" id="CLU_031317_2_0_3"/>
<dbReference type="OrthoDB" id="9800940at2"/>
<dbReference type="Proteomes" id="UP000002590">
    <property type="component" value="Chromosome"/>
</dbReference>
<dbReference type="GO" id="GO:0042781">
    <property type="term" value="F:3'-tRNA processing endoribonuclease activity"/>
    <property type="evidence" value="ECO:0007669"/>
    <property type="project" value="UniProtKB-UniRule"/>
</dbReference>
<dbReference type="GO" id="GO:0008270">
    <property type="term" value="F:zinc ion binding"/>
    <property type="evidence" value="ECO:0007669"/>
    <property type="project" value="UniProtKB-UniRule"/>
</dbReference>
<dbReference type="CDD" id="cd07717">
    <property type="entry name" value="RNaseZ_ZiPD-like_MBL-fold"/>
    <property type="match status" value="1"/>
</dbReference>
<dbReference type="FunFam" id="3.60.15.10:FF:000002">
    <property type="entry name" value="Ribonuclease Z"/>
    <property type="match status" value="1"/>
</dbReference>
<dbReference type="Gene3D" id="3.60.15.10">
    <property type="entry name" value="Ribonuclease Z/Hydroxyacylglutathione hydrolase-like"/>
    <property type="match status" value="1"/>
</dbReference>
<dbReference type="HAMAP" id="MF_01818">
    <property type="entry name" value="RNase_Z_BN"/>
    <property type="match status" value="1"/>
</dbReference>
<dbReference type="InterPro" id="IPR001279">
    <property type="entry name" value="Metallo-B-lactamas"/>
</dbReference>
<dbReference type="InterPro" id="IPR036866">
    <property type="entry name" value="RibonucZ/Hydroxyglut_hydro"/>
</dbReference>
<dbReference type="InterPro" id="IPR013471">
    <property type="entry name" value="RNase_Z/BN"/>
</dbReference>
<dbReference type="NCBIfam" id="NF000801">
    <property type="entry name" value="PRK00055.1-3"/>
    <property type="match status" value="1"/>
</dbReference>
<dbReference type="NCBIfam" id="TIGR02651">
    <property type="entry name" value="RNase_Z"/>
    <property type="match status" value="1"/>
</dbReference>
<dbReference type="PANTHER" id="PTHR46018">
    <property type="entry name" value="ZINC PHOSPHODIESTERASE ELAC PROTEIN 1"/>
    <property type="match status" value="1"/>
</dbReference>
<dbReference type="PANTHER" id="PTHR46018:SF2">
    <property type="entry name" value="ZINC PHOSPHODIESTERASE ELAC PROTEIN 1"/>
    <property type="match status" value="1"/>
</dbReference>
<dbReference type="Pfam" id="PF00753">
    <property type="entry name" value="Lactamase_B"/>
    <property type="match status" value="1"/>
</dbReference>
<dbReference type="SUPFAM" id="SSF56281">
    <property type="entry name" value="Metallo-hydrolase/oxidoreductase"/>
    <property type="match status" value="1"/>
</dbReference>
<proteinExistence type="inferred from homology"/>
<protein>
    <recommendedName>
        <fullName evidence="1">Ribonuclease Z</fullName>
        <shortName evidence="1">RNase Z</shortName>
        <ecNumber evidence="1">3.1.26.11</ecNumber>
    </recommendedName>
    <alternativeName>
        <fullName evidence="1">tRNA 3 endonuclease</fullName>
    </alternativeName>
    <alternativeName>
        <fullName evidence="1">tRNase Z</fullName>
    </alternativeName>
</protein>
<comment type="function">
    <text evidence="1">Zinc phosphodiesterase, which displays some tRNA 3'-processing endonuclease activity. Probably involved in tRNA maturation, by removing a 3'-trailer from precursor tRNA.</text>
</comment>
<comment type="catalytic activity">
    <reaction evidence="1">
        <text>Endonucleolytic cleavage of RNA, removing extra 3' nucleotides from tRNA precursor, generating 3' termini of tRNAs. A 3'-hydroxy group is left at the tRNA terminus and a 5'-phosphoryl group is left at the trailer molecule.</text>
        <dbReference type="EC" id="3.1.26.11"/>
    </reaction>
</comment>
<comment type="cofactor">
    <cofactor evidence="1">
        <name>Zn(2+)</name>
        <dbReference type="ChEBI" id="CHEBI:29105"/>
    </cofactor>
    <text evidence="1">Binds 2 Zn(2+) ions.</text>
</comment>
<comment type="subunit">
    <text evidence="1">Homodimer.</text>
</comment>
<comment type="similarity">
    <text evidence="1">Belongs to the RNase Z family.</text>
</comment>
<sequence>MNITFLGTSSGVPSLTRNVSSLALKLSQSAEVWLFDCGEGTQHQIMKSNIKSSQIKKIFITHMHGDHIYGLPGLLATLGLSGNSEGIEIYGPSELRSFINSALKSSFCKLSFPLHFVEVENFALKNKILFENNKIKVNCACLKHKIPAYGYRVSEKDKPGVFDIKKAESLKIAPGPIYSELQQGKKVVLPDGRTFDGKEFCGPPREGESFVYCTDTVFSESAVSLSKNADLLVHESTFSQTDERMAYEKLHSTTIMAAKTALLSNTKKLIITHLSPRYTNKNSITPGDLLKEAQKVFPNTHLAKDFLTAEIK</sequence>
<accession>A2BSS2</accession>